<proteinExistence type="evidence at protein level"/>
<comment type="function">
    <text evidence="1">Hydrolyzes pyrophosphate, phosphodiester and phosphosulfate linkages of nucleotide-sugars, sulfonucleotides and nucleoside di and triphosphates. Highest activity observed with the substrates ADP-glucose and adenosine 5'-phosphosulfate.</text>
</comment>
<comment type="subunit">
    <text evidence="1">Monomer and homomer.</text>
</comment>
<comment type="subcellular location">
    <subcellularLocation>
        <location evidence="1">Plastid</location>
        <location evidence="1">Chloroplast</location>
    </subcellularLocation>
</comment>
<comment type="PTM">
    <text evidence="1">Glycosylated.</text>
</comment>
<comment type="similarity">
    <text evidence="2">Belongs to the metallophosphoesterase superfamily.</text>
</comment>
<gene>
    <name evidence="3" type="primary">npp</name>
</gene>
<feature type="chain" id="PRO_0000057946" description="Nucleotide pyrophosphatase/phosphodiesterase">
    <location>
        <begin position="1"/>
        <end position="368"/>
    </location>
</feature>
<feature type="non-consecutive residues" evidence="2">
    <location>
        <begin position="18"/>
        <end position="19"/>
    </location>
</feature>
<accession>Q687E1</accession>
<accession>P83656</accession>
<evidence type="ECO:0000269" key="1">
    <source ref="1"/>
</evidence>
<evidence type="ECO:0000305" key="2"/>
<evidence type="ECO:0000312" key="3">
    <source>
        <dbReference type="EMBL" id="CAE46394.1"/>
    </source>
</evidence>
<name>NPP_HORVU</name>
<keyword id="KW-0150">Chloroplast</keyword>
<keyword id="KW-0903">Direct protein sequencing</keyword>
<keyword id="KW-0325">Glycoprotein</keyword>
<keyword id="KW-0378">Hydrolase</keyword>
<keyword id="KW-0934">Plastid</keyword>
<sequence length="368" mass="41746">AAVRASPDLLGSRGEDTASDGSVVWAKPYTFRAPPTPGQNSLQRIIVFGDMGKAERDGSNEFANYQPGSLNTTDRLIEDLDNYDIVFHIGDMPYANGYLSQWDQFTAQVAPISAKKPYMVASGNHERDWPNTGGFFDVKDSGGECGVPAETMYYYPAENRANFWYKVDYGMFRFCVGDSEHDWREGTPQYKFIEECLSTVDRKHQPWLIFTAHRVLGYSSNSWYADQGSFEEPEGRESLQKLWQRYRVDIAYFGHVHNYERTCPLYQSQCVNADKTHYSGTMNGTIFVVAGGGGSHLSSYTTAIPKWSIFRDHDYGFTKLTAFNHSSLLFEYMKSSDGKVYDSFTIHRDYRDVLSCVHDSCFPTTLAS</sequence>
<dbReference type="EC" id="3.-.-.-"/>
<dbReference type="EMBL" id="AJ581660">
    <property type="protein sequence ID" value="CAE46394.1"/>
    <property type="molecule type" value="mRNA"/>
</dbReference>
<dbReference type="SMR" id="Q687E1"/>
<dbReference type="ExpressionAtlas" id="Q687E1">
    <property type="expression patterns" value="baseline and differential"/>
</dbReference>
<dbReference type="GO" id="GO:0009507">
    <property type="term" value="C:chloroplast"/>
    <property type="evidence" value="ECO:0007669"/>
    <property type="project" value="UniProtKB-SubCell"/>
</dbReference>
<dbReference type="GO" id="GO:0016787">
    <property type="term" value="F:hydrolase activity"/>
    <property type="evidence" value="ECO:0007669"/>
    <property type="project" value="UniProtKB-KW"/>
</dbReference>
<dbReference type="CDD" id="cd00839">
    <property type="entry name" value="MPP_PAPs"/>
    <property type="match status" value="1"/>
</dbReference>
<dbReference type="Gene3D" id="3.60.21.10">
    <property type="match status" value="1"/>
</dbReference>
<dbReference type="InterPro" id="IPR004843">
    <property type="entry name" value="Calcineurin-like_PHP_ApaH"/>
</dbReference>
<dbReference type="InterPro" id="IPR029052">
    <property type="entry name" value="Metallo-depent_PP-like"/>
</dbReference>
<dbReference type="InterPro" id="IPR041792">
    <property type="entry name" value="MPP_PAP"/>
</dbReference>
<dbReference type="InterPro" id="IPR025733">
    <property type="entry name" value="Purple_acid_PPase_C_dom"/>
</dbReference>
<dbReference type="PANTHER" id="PTHR45778:SF39">
    <property type="entry name" value="PURPLE ACID PHOSPHATASE"/>
    <property type="match status" value="1"/>
</dbReference>
<dbReference type="PANTHER" id="PTHR45778">
    <property type="entry name" value="PURPLE ACID PHOSPHATASE-RELATED"/>
    <property type="match status" value="1"/>
</dbReference>
<dbReference type="Pfam" id="PF00149">
    <property type="entry name" value="Metallophos"/>
    <property type="match status" value="1"/>
</dbReference>
<dbReference type="Pfam" id="PF14008">
    <property type="entry name" value="Metallophos_C"/>
    <property type="match status" value="1"/>
</dbReference>
<dbReference type="SUPFAM" id="SSF56300">
    <property type="entry name" value="Metallo-dependent phosphatases"/>
    <property type="match status" value="1"/>
</dbReference>
<organism>
    <name type="scientific">Hordeum vulgare</name>
    <name type="common">Barley</name>
    <dbReference type="NCBI Taxonomy" id="4513"/>
    <lineage>
        <taxon>Eukaryota</taxon>
        <taxon>Viridiplantae</taxon>
        <taxon>Streptophyta</taxon>
        <taxon>Embryophyta</taxon>
        <taxon>Tracheophyta</taxon>
        <taxon>Spermatophyta</taxon>
        <taxon>Magnoliopsida</taxon>
        <taxon>Liliopsida</taxon>
        <taxon>Poales</taxon>
        <taxon>Poaceae</taxon>
        <taxon>BOP clade</taxon>
        <taxon>Pooideae</taxon>
        <taxon>Triticodae</taxon>
        <taxon>Triticeae</taxon>
        <taxon>Hordeinae</taxon>
        <taxon>Hordeum</taxon>
    </lineage>
</organism>
<reference evidence="2 3" key="1">
    <citation type="submission" date="2003-08" db="EMBL/GenBank/DDBJ databases">
        <title>Cloning, expression and characterization of a glycosylated nucleotide pyrophosphatase/phosphodiesterase occurring in chloroplasts that belongs to a widely distributed group of plant nucleotide hydrolases.</title>
        <authorList>
            <person name="Nanjo Y."/>
            <person name="Rodriguez-Lopez M."/>
            <person name="Munoz F.J."/>
            <person name="Kurokawa S."/>
            <person name="Baroja-Fernandez E."/>
            <person name="Mitsui T."/>
            <person name="Pozueta-Romero J."/>
        </authorList>
    </citation>
    <scope>PROTEIN SEQUENCE OF 1-18</scope>
    <scope>NUCLEOTIDE SEQUENCE [MRNA] OF 19-368</scope>
    <scope>FUNCTION</scope>
    <scope>SUBUNIT</scope>
    <scope>SUBCELLULAR LOCATION</scope>
    <scope>GLYCOSYLATION</scope>
    <source>
        <strain evidence="1">cv. Scarlet</strain>
        <tissue evidence="1 3">Leaf</tissue>
    </source>
</reference>
<protein>
    <recommendedName>
        <fullName>Nucleotide pyrophosphatase/phosphodiesterase</fullName>
        <ecNumber>3.-.-.-</ecNumber>
    </recommendedName>
</protein>